<protein>
    <recommendedName>
        <fullName evidence="1">Peptide chain release factor 3</fullName>
        <shortName evidence="1">RF-3</shortName>
    </recommendedName>
</protein>
<reference key="1">
    <citation type="journal article" date="2004" name="Nat. Genet.">
        <title>Evidence in the Legionella pneumophila genome for exploitation of host cell functions and high genome plasticity.</title>
        <authorList>
            <person name="Cazalet C."/>
            <person name="Rusniok C."/>
            <person name="Brueggemann H."/>
            <person name="Zidane N."/>
            <person name="Magnier A."/>
            <person name="Ma L."/>
            <person name="Tichit M."/>
            <person name="Jarraud S."/>
            <person name="Bouchier C."/>
            <person name="Vandenesch F."/>
            <person name="Kunst F."/>
            <person name="Etienne J."/>
            <person name="Glaser P."/>
            <person name="Buchrieser C."/>
        </authorList>
    </citation>
    <scope>NUCLEOTIDE SEQUENCE [LARGE SCALE GENOMIC DNA]</scope>
    <source>
        <strain>Lens</strain>
    </source>
</reference>
<comment type="function">
    <text evidence="1">Increases the formation of ribosomal termination complexes and stimulates activities of RF-1 and RF-2. It binds guanine nucleotides and has strong preference for UGA stop codons. It may interact directly with the ribosome. The stimulation of RF-1 and RF-2 is significantly reduced by GTP and GDP, but not by GMP.</text>
</comment>
<comment type="subcellular location">
    <subcellularLocation>
        <location evidence="1">Cytoplasm</location>
    </subcellularLocation>
</comment>
<comment type="similarity">
    <text evidence="1">Belongs to the TRAFAC class translation factor GTPase superfamily. Classic translation factor GTPase family. PrfC subfamily.</text>
</comment>
<evidence type="ECO:0000255" key="1">
    <source>
        <dbReference type="HAMAP-Rule" id="MF_00072"/>
    </source>
</evidence>
<gene>
    <name evidence="1" type="primary">prfC</name>
    <name type="ordered locus">lpl0905</name>
</gene>
<dbReference type="EMBL" id="CR628337">
    <property type="protein sequence ID" value="CAH15139.1"/>
    <property type="molecule type" value="Genomic_DNA"/>
</dbReference>
<dbReference type="RefSeq" id="WP_011215050.1">
    <property type="nucleotide sequence ID" value="NC_006369.1"/>
</dbReference>
<dbReference type="SMR" id="Q5WY34"/>
<dbReference type="KEGG" id="lpf:lpl0905"/>
<dbReference type="LegioList" id="lpl0905"/>
<dbReference type="HOGENOM" id="CLU_002794_2_1_6"/>
<dbReference type="Proteomes" id="UP000002517">
    <property type="component" value="Chromosome"/>
</dbReference>
<dbReference type="GO" id="GO:0005829">
    <property type="term" value="C:cytosol"/>
    <property type="evidence" value="ECO:0007669"/>
    <property type="project" value="TreeGrafter"/>
</dbReference>
<dbReference type="GO" id="GO:0005525">
    <property type="term" value="F:GTP binding"/>
    <property type="evidence" value="ECO:0007669"/>
    <property type="project" value="UniProtKB-UniRule"/>
</dbReference>
<dbReference type="GO" id="GO:0003924">
    <property type="term" value="F:GTPase activity"/>
    <property type="evidence" value="ECO:0007669"/>
    <property type="project" value="InterPro"/>
</dbReference>
<dbReference type="GO" id="GO:0097216">
    <property type="term" value="F:guanosine tetraphosphate binding"/>
    <property type="evidence" value="ECO:0007669"/>
    <property type="project" value="UniProtKB-ARBA"/>
</dbReference>
<dbReference type="GO" id="GO:0016150">
    <property type="term" value="F:translation release factor activity, codon nonspecific"/>
    <property type="evidence" value="ECO:0007669"/>
    <property type="project" value="TreeGrafter"/>
</dbReference>
<dbReference type="GO" id="GO:0016149">
    <property type="term" value="F:translation release factor activity, codon specific"/>
    <property type="evidence" value="ECO:0007669"/>
    <property type="project" value="UniProtKB-UniRule"/>
</dbReference>
<dbReference type="GO" id="GO:0006449">
    <property type="term" value="P:regulation of translational termination"/>
    <property type="evidence" value="ECO:0007669"/>
    <property type="project" value="UniProtKB-UniRule"/>
</dbReference>
<dbReference type="CDD" id="cd04169">
    <property type="entry name" value="RF3"/>
    <property type="match status" value="1"/>
</dbReference>
<dbReference type="CDD" id="cd03689">
    <property type="entry name" value="RF3_II"/>
    <property type="match status" value="1"/>
</dbReference>
<dbReference type="FunFam" id="2.40.30.10:FF:000040">
    <property type="entry name" value="Peptide chain release factor 3"/>
    <property type="match status" value="1"/>
</dbReference>
<dbReference type="FunFam" id="3.30.70.3280:FF:000001">
    <property type="entry name" value="Peptide chain release factor 3"/>
    <property type="match status" value="1"/>
</dbReference>
<dbReference type="FunFam" id="3.40.50.300:FF:000542">
    <property type="entry name" value="Peptide chain release factor 3"/>
    <property type="match status" value="1"/>
</dbReference>
<dbReference type="Gene3D" id="3.40.50.300">
    <property type="entry name" value="P-loop containing nucleotide triphosphate hydrolases"/>
    <property type="match status" value="2"/>
</dbReference>
<dbReference type="Gene3D" id="3.30.70.3280">
    <property type="entry name" value="Peptide chain release factor 3, domain III"/>
    <property type="match status" value="1"/>
</dbReference>
<dbReference type="HAMAP" id="MF_00072">
    <property type="entry name" value="Rel_fac_3"/>
    <property type="match status" value="1"/>
</dbReference>
<dbReference type="InterPro" id="IPR053905">
    <property type="entry name" value="EF-G-like_DII"/>
</dbReference>
<dbReference type="InterPro" id="IPR035647">
    <property type="entry name" value="EFG_III/V"/>
</dbReference>
<dbReference type="InterPro" id="IPR031157">
    <property type="entry name" value="G_TR_CS"/>
</dbReference>
<dbReference type="InterPro" id="IPR027417">
    <property type="entry name" value="P-loop_NTPase"/>
</dbReference>
<dbReference type="InterPro" id="IPR004548">
    <property type="entry name" value="PrfC"/>
</dbReference>
<dbReference type="InterPro" id="IPR032090">
    <property type="entry name" value="RF3_C"/>
</dbReference>
<dbReference type="InterPro" id="IPR038467">
    <property type="entry name" value="RF3_dom_3_sf"/>
</dbReference>
<dbReference type="InterPro" id="IPR041732">
    <property type="entry name" value="RF3_GTP-bd"/>
</dbReference>
<dbReference type="InterPro" id="IPR005225">
    <property type="entry name" value="Small_GTP-bd"/>
</dbReference>
<dbReference type="InterPro" id="IPR000795">
    <property type="entry name" value="T_Tr_GTP-bd_dom"/>
</dbReference>
<dbReference type="InterPro" id="IPR009000">
    <property type="entry name" value="Transl_B-barrel_sf"/>
</dbReference>
<dbReference type="NCBIfam" id="TIGR00503">
    <property type="entry name" value="prfC"/>
    <property type="match status" value="1"/>
</dbReference>
<dbReference type="NCBIfam" id="NF001964">
    <property type="entry name" value="PRK00741.1"/>
    <property type="match status" value="1"/>
</dbReference>
<dbReference type="NCBIfam" id="TIGR00231">
    <property type="entry name" value="small_GTP"/>
    <property type="match status" value="1"/>
</dbReference>
<dbReference type="PANTHER" id="PTHR43556">
    <property type="entry name" value="PEPTIDE CHAIN RELEASE FACTOR RF3"/>
    <property type="match status" value="1"/>
</dbReference>
<dbReference type="PANTHER" id="PTHR43556:SF2">
    <property type="entry name" value="PEPTIDE CHAIN RELEASE FACTOR RF3"/>
    <property type="match status" value="1"/>
</dbReference>
<dbReference type="Pfam" id="PF22042">
    <property type="entry name" value="EF-G_D2"/>
    <property type="match status" value="1"/>
</dbReference>
<dbReference type="Pfam" id="PF00009">
    <property type="entry name" value="GTP_EFTU"/>
    <property type="match status" value="1"/>
</dbReference>
<dbReference type="Pfam" id="PF16658">
    <property type="entry name" value="RF3_C"/>
    <property type="match status" value="1"/>
</dbReference>
<dbReference type="PRINTS" id="PR00315">
    <property type="entry name" value="ELONGATNFCT"/>
</dbReference>
<dbReference type="SUPFAM" id="SSF54980">
    <property type="entry name" value="EF-G C-terminal domain-like"/>
    <property type="match status" value="1"/>
</dbReference>
<dbReference type="SUPFAM" id="SSF52540">
    <property type="entry name" value="P-loop containing nucleoside triphosphate hydrolases"/>
    <property type="match status" value="1"/>
</dbReference>
<dbReference type="SUPFAM" id="SSF50447">
    <property type="entry name" value="Translation proteins"/>
    <property type="match status" value="1"/>
</dbReference>
<dbReference type="PROSITE" id="PS00301">
    <property type="entry name" value="G_TR_1"/>
    <property type="match status" value="1"/>
</dbReference>
<dbReference type="PROSITE" id="PS51722">
    <property type="entry name" value="G_TR_2"/>
    <property type="match status" value="1"/>
</dbReference>
<name>RF3_LEGPL</name>
<organism>
    <name type="scientific">Legionella pneumophila (strain Lens)</name>
    <dbReference type="NCBI Taxonomy" id="297245"/>
    <lineage>
        <taxon>Bacteria</taxon>
        <taxon>Pseudomonadati</taxon>
        <taxon>Pseudomonadota</taxon>
        <taxon>Gammaproteobacteria</taxon>
        <taxon>Legionellales</taxon>
        <taxon>Legionellaceae</taxon>
        <taxon>Legionella</taxon>
    </lineage>
</organism>
<feature type="chain" id="PRO_0000242187" description="Peptide chain release factor 3">
    <location>
        <begin position="1"/>
        <end position="526"/>
    </location>
</feature>
<feature type="domain" description="tr-type G">
    <location>
        <begin position="9"/>
        <end position="277"/>
    </location>
</feature>
<feature type="binding site" evidence="1">
    <location>
        <begin position="18"/>
        <end position="25"/>
    </location>
    <ligand>
        <name>GTP</name>
        <dbReference type="ChEBI" id="CHEBI:37565"/>
    </ligand>
</feature>
<feature type="binding site" evidence="1">
    <location>
        <begin position="86"/>
        <end position="90"/>
    </location>
    <ligand>
        <name>GTP</name>
        <dbReference type="ChEBI" id="CHEBI:37565"/>
    </ligand>
</feature>
<feature type="binding site" evidence="1">
    <location>
        <begin position="140"/>
        <end position="143"/>
    </location>
    <ligand>
        <name>GTP</name>
        <dbReference type="ChEBI" id="CHEBI:37565"/>
    </ligand>
</feature>
<sequence>MSDFYQDFNKRRTFAIISHPDAGKTTVTEKLLLFGGAIQLAGTVKGRKADRHATSDWMEMEKERGISITTSVMQFVHNQHVINLLDTPGHEDFSEDTYRTLTAVDSALMVIDVAKGVEERTVKLMEVCRLRDTPIMTFINKLDREGREPIDLLDEVESVLGIQCAPITWPVGMGKRFKGIYHRYQDIIYLYQQGSNAKKIDATQIKGLDNPQLDELIGDSAKELREEIELVRGASNEFNLQDYLAGKMTPVYFGSAINNFGIKELLDDFVEYAPGPQPRATQERVVSPNEETFSGFVFKIQANMDPKHRDRIAFVRVCSGSYKKGMKLSHLRIGKEVQISNALTFMAGDRSHTELALAGDIIGLHNHGTIRIGDTFTQGEQLKFTGIPNFAPELFRLVRLRDPLKSKALLKGLIELSEEGATQVFRPLNSNQLILGAVGILQFDVVAHRLKYEYKVDCIYESVNIACARWVYSDDDKAMSEFRTKAYDYLALDGGDMLMYLAPTKVNLTMAEERYPKIKFCATREH</sequence>
<keyword id="KW-0963">Cytoplasm</keyword>
<keyword id="KW-0342">GTP-binding</keyword>
<keyword id="KW-0547">Nucleotide-binding</keyword>
<keyword id="KW-0648">Protein biosynthesis</keyword>
<accession>Q5WY34</accession>
<proteinExistence type="inferred from homology"/>